<sequence>MQTGSTPHDDRAGVSANGILGAQARGASGRLLPEIWMQDGAKRVEEALARLLCAEDDGETELMAAMRYATLHGGKRTRALLCLAAGALADTPAHMLDDVGAAIEMMHACTLVHDDLPAMDDDVLRRGLPTVHVKFGEATAILVGDALQAHAFLTLASLNAPGDSPIALVRELAQAVSAEGAAGGQAIDLSLVGKHVELDRIVAMHRMKSGALVRASVRMGALCAVGVNAAHAALYCALDHYSACFGLALQVIDDILDVTADTAALGKTPGKDAAAQKPTCASIMGLQEARQFALDLLRDAGEAIAPLGPRAERLAQLIQRANAYLFKHAPRA</sequence>
<evidence type="ECO:0000250" key="1"/>
<evidence type="ECO:0000250" key="2">
    <source>
        <dbReference type="UniProtKB" id="P14324"/>
    </source>
</evidence>
<evidence type="ECO:0000250" key="3">
    <source>
        <dbReference type="UniProtKB" id="Q12051"/>
    </source>
</evidence>
<evidence type="ECO:0000305" key="4"/>
<dbReference type="EC" id="2.5.1.10"/>
<dbReference type="EMBL" id="U12678">
    <property type="protein sequence ID" value="AAC28894.1"/>
    <property type="molecule type" value="Genomic_DNA"/>
</dbReference>
<dbReference type="EMBL" id="BA000040">
    <property type="protein sequence ID" value="BAC47413.1"/>
    <property type="status" value="ALT_INIT"/>
    <property type="molecule type" value="Genomic_DNA"/>
</dbReference>
<dbReference type="PIR" id="I40213">
    <property type="entry name" value="I40213"/>
</dbReference>
<dbReference type="RefSeq" id="NP_768788.1">
    <property type="nucleotide sequence ID" value="NC_004463.1"/>
</dbReference>
<dbReference type="RefSeq" id="WP_028144010.1">
    <property type="nucleotide sequence ID" value="NZ_CP011360.1"/>
</dbReference>
<dbReference type="SMR" id="Q45220"/>
<dbReference type="FunCoup" id="Q45220">
    <property type="interactions" value="422"/>
</dbReference>
<dbReference type="STRING" id="224911.AAV28_07585"/>
<dbReference type="EnsemblBacteria" id="BAC47413">
    <property type="protein sequence ID" value="BAC47413"/>
    <property type="gene ID" value="BAC47413"/>
</dbReference>
<dbReference type="KEGG" id="bja:blr2148"/>
<dbReference type="PATRIC" id="fig|224911.44.peg.1664"/>
<dbReference type="eggNOG" id="COG0142">
    <property type="taxonomic scope" value="Bacteria"/>
</dbReference>
<dbReference type="HOGENOM" id="CLU_014015_0_0_5"/>
<dbReference type="InParanoid" id="Q45220"/>
<dbReference type="OrthoDB" id="9805316at2"/>
<dbReference type="Proteomes" id="UP000002526">
    <property type="component" value="Chromosome"/>
</dbReference>
<dbReference type="GO" id="GO:0005737">
    <property type="term" value="C:cytoplasm"/>
    <property type="evidence" value="ECO:0007669"/>
    <property type="project" value="UniProtKB-SubCell"/>
</dbReference>
<dbReference type="GO" id="GO:0004337">
    <property type="term" value="F:(2E,6E)-farnesyl diphosphate synthase activity"/>
    <property type="evidence" value="ECO:0007669"/>
    <property type="project" value="UniProtKB-EC"/>
</dbReference>
<dbReference type="GO" id="GO:0046872">
    <property type="term" value="F:metal ion binding"/>
    <property type="evidence" value="ECO:0007669"/>
    <property type="project" value="UniProtKB-KW"/>
</dbReference>
<dbReference type="GO" id="GO:0004659">
    <property type="term" value="F:prenyltransferase activity"/>
    <property type="evidence" value="ECO:0000318"/>
    <property type="project" value="GO_Central"/>
</dbReference>
<dbReference type="GO" id="GO:0008299">
    <property type="term" value="P:isoprenoid biosynthetic process"/>
    <property type="evidence" value="ECO:0007669"/>
    <property type="project" value="UniProtKB-KW"/>
</dbReference>
<dbReference type="CDD" id="cd00685">
    <property type="entry name" value="Trans_IPPS_HT"/>
    <property type="match status" value="1"/>
</dbReference>
<dbReference type="FunFam" id="1.10.600.10:FF:000001">
    <property type="entry name" value="Geranylgeranyl diphosphate synthase"/>
    <property type="match status" value="1"/>
</dbReference>
<dbReference type="Gene3D" id="1.10.600.10">
    <property type="entry name" value="Farnesyl Diphosphate Synthase"/>
    <property type="match status" value="1"/>
</dbReference>
<dbReference type="InterPro" id="IPR008949">
    <property type="entry name" value="Isoprenoid_synthase_dom_sf"/>
</dbReference>
<dbReference type="InterPro" id="IPR000092">
    <property type="entry name" value="Polyprenyl_synt"/>
</dbReference>
<dbReference type="InterPro" id="IPR033749">
    <property type="entry name" value="Polyprenyl_synt_CS"/>
</dbReference>
<dbReference type="PANTHER" id="PTHR43281">
    <property type="entry name" value="FARNESYL DIPHOSPHATE SYNTHASE"/>
    <property type="match status" value="1"/>
</dbReference>
<dbReference type="PANTHER" id="PTHR43281:SF1">
    <property type="entry name" value="FARNESYL DIPHOSPHATE SYNTHASE"/>
    <property type="match status" value="1"/>
</dbReference>
<dbReference type="Pfam" id="PF00348">
    <property type="entry name" value="polyprenyl_synt"/>
    <property type="match status" value="1"/>
</dbReference>
<dbReference type="SFLD" id="SFLDS00005">
    <property type="entry name" value="Isoprenoid_Synthase_Type_I"/>
    <property type="match status" value="1"/>
</dbReference>
<dbReference type="SFLD" id="SFLDG01017">
    <property type="entry name" value="Polyprenyl_Transferase_Like"/>
    <property type="match status" value="1"/>
</dbReference>
<dbReference type="SUPFAM" id="SSF48576">
    <property type="entry name" value="Terpenoid synthases"/>
    <property type="match status" value="1"/>
</dbReference>
<dbReference type="PROSITE" id="PS00723">
    <property type="entry name" value="POLYPRENYL_SYNTHASE_1"/>
    <property type="match status" value="1"/>
</dbReference>
<dbReference type="PROSITE" id="PS00444">
    <property type="entry name" value="POLYPRENYL_SYNTHASE_2"/>
    <property type="match status" value="1"/>
</dbReference>
<gene>
    <name type="primary">fppS</name>
    <name type="ordered locus">blr2148</name>
</gene>
<proteinExistence type="inferred from homology"/>
<name>ISPA_BRADU</name>
<organism>
    <name type="scientific">Bradyrhizobium diazoefficiens (strain JCM 10833 / BCRC 13528 / IAM 13628 / NBRC 14792 / USDA 110)</name>
    <dbReference type="NCBI Taxonomy" id="224911"/>
    <lineage>
        <taxon>Bacteria</taxon>
        <taxon>Pseudomonadati</taxon>
        <taxon>Pseudomonadota</taxon>
        <taxon>Alphaproteobacteria</taxon>
        <taxon>Hyphomicrobiales</taxon>
        <taxon>Nitrobacteraceae</taxon>
        <taxon>Bradyrhizobium</taxon>
    </lineage>
</organism>
<feature type="chain" id="PRO_0000123987" description="Probable farnesyl diphosphate synthase">
    <location>
        <begin position="1"/>
        <end position="332"/>
    </location>
</feature>
<feature type="binding site" evidence="2">
    <location>
        <position position="75"/>
    </location>
    <ligand>
        <name>isopentenyl diphosphate</name>
        <dbReference type="ChEBI" id="CHEBI:128769"/>
    </ligand>
</feature>
<feature type="binding site" evidence="2">
    <location>
        <position position="78"/>
    </location>
    <ligand>
        <name>isopentenyl diphosphate</name>
        <dbReference type="ChEBI" id="CHEBI:128769"/>
    </ligand>
</feature>
<feature type="binding site" evidence="3">
    <location>
        <position position="107"/>
    </location>
    <ligand>
        <name>isopentenyl diphosphate</name>
        <dbReference type="ChEBI" id="CHEBI:128769"/>
    </ligand>
</feature>
<feature type="binding site" evidence="2">
    <location>
        <position position="114"/>
    </location>
    <ligand>
        <name>Mg(2+)</name>
        <dbReference type="ChEBI" id="CHEBI:18420"/>
        <label>1</label>
    </ligand>
</feature>
<feature type="binding site" evidence="2">
    <location>
        <position position="114"/>
    </location>
    <ligand>
        <name>Mg(2+)</name>
        <dbReference type="ChEBI" id="CHEBI:18420"/>
        <label>2</label>
    </ligand>
</feature>
<feature type="binding site" evidence="2">
    <location>
        <position position="120"/>
    </location>
    <ligand>
        <name>Mg(2+)</name>
        <dbReference type="ChEBI" id="CHEBI:18420"/>
        <label>1</label>
    </ligand>
</feature>
<feature type="binding site" evidence="2">
    <location>
        <position position="120"/>
    </location>
    <ligand>
        <name>Mg(2+)</name>
        <dbReference type="ChEBI" id="CHEBI:18420"/>
        <label>2</label>
    </ligand>
</feature>
<feature type="binding site" evidence="1">
    <location>
        <position position="125"/>
    </location>
    <ligand>
        <name>(2E)-geranyl diphosphate</name>
        <dbReference type="ChEBI" id="CHEBI:58057"/>
    </ligand>
</feature>
<feature type="binding site" evidence="2">
    <location>
        <position position="126"/>
    </location>
    <ligand>
        <name>isopentenyl diphosphate</name>
        <dbReference type="ChEBI" id="CHEBI:128769"/>
    </ligand>
</feature>
<feature type="binding site" evidence="1">
    <location>
        <position position="208"/>
    </location>
    <ligand>
        <name>(2E)-geranyl diphosphate</name>
        <dbReference type="ChEBI" id="CHEBI:58057"/>
    </ligand>
</feature>
<feature type="binding site" evidence="1">
    <location>
        <position position="209"/>
    </location>
    <ligand>
        <name>(2E)-geranyl diphosphate</name>
        <dbReference type="ChEBI" id="CHEBI:58057"/>
    </ligand>
</feature>
<feature type="binding site" evidence="1">
    <location>
        <position position="250"/>
    </location>
    <ligand>
        <name>(2E)-geranyl diphosphate</name>
        <dbReference type="ChEBI" id="CHEBI:58057"/>
    </ligand>
</feature>
<feature type="binding site" evidence="1">
    <location>
        <position position="267"/>
    </location>
    <ligand>
        <name>(2E)-geranyl diphosphate</name>
        <dbReference type="ChEBI" id="CHEBI:58057"/>
    </ligand>
</feature>
<accession>Q45220</accession>
<reference key="1">
    <citation type="journal article" date="1993" name="Appl. Environ. Microbiol.">
        <title>Cloning and mutagenesis of a cytochrome P-450 locus from Bradyrhizobium japonicum that is expressed anaerobically and symbiotically.</title>
        <authorList>
            <person name="Tully R.E."/>
            <person name="Keister D.L."/>
        </authorList>
    </citation>
    <scope>NUCLEOTIDE SEQUENCE [GENOMIC DNA]</scope>
    <source>
        <strain>JCM 10833 / BCRC 13528 / IAM 13628 / NBRC 14792 / USDA 110</strain>
    </source>
</reference>
<reference key="2">
    <citation type="journal article" date="1998" name="Biochim. Biophys. Acta">
        <title>Identification and sequencing of a cytochrome P450 gene cluster from Bradyrhizobium japonicum.</title>
        <authorList>
            <person name="Tully R.E."/>
            <person name="van Berkum P."/>
            <person name="Lovins K.W."/>
            <person name="Keister D.L."/>
        </authorList>
    </citation>
    <scope>NUCLEOTIDE SEQUENCE [GENOMIC DNA]</scope>
    <source>
        <strain>JCM 10833 / BCRC 13528 / IAM 13628 / NBRC 14792 / USDA 110</strain>
    </source>
</reference>
<reference key="3">
    <citation type="journal article" date="2002" name="DNA Res.">
        <title>Complete genomic sequence of nitrogen-fixing symbiotic bacterium Bradyrhizobium japonicum USDA110.</title>
        <authorList>
            <person name="Kaneko T."/>
            <person name="Nakamura Y."/>
            <person name="Sato S."/>
            <person name="Minamisawa K."/>
            <person name="Uchiumi T."/>
            <person name="Sasamoto S."/>
            <person name="Watanabe A."/>
            <person name="Idesawa K."/>
            <person name="Iriguchi M."/>
            <person name="Kawashima K."/>
            <person name="Kohara M."/>
            <person name="Matsumoto M."/>
            <person name="Shimpo S."/>
            <person name="Tsuruoka H."/>
            <person name="Wada T."/>
            <person name="Yamada M."/>
            <person name="Tabata S."/>
        </authorList>
    </citation>
    <scope>NUCLEOTIDE SEQUENCE [LARGE SCALE GENOMIC DNA]</scope>
    <source>
        <strain>JCM 10833 / BCRC 13528 / IAM 13628 / NBRC 14792 / USDA 110</strain>
    </source>
</reference>
<protein>
    <recommendedName>
        <fullName>Probable farnesyl diphosphate synthase</fullName>
        <shortName>FPP synthase</shortName>
        <ecNumber>2.5.1.10</ecNumber>
    </recommendedName>
    <alternativeName>
        <fullName>(2E,6E)-farnesyl diphosphate synthase</fullName>
    </alternativeName>
    <alternativeName>
        <fullName>Geranyltranstransferase</fullName>
    </alternativeName>
</protein>
<comment type="catalytic activity">
    <reaction>
        <text>isopentenyl diphosphate + (2E)-geranyl diphosphate = (2E,6E)-farnesyl diphosphate + diphosphate</text>
        <dbReference type="Rhea" id="RHEA:19361"/>
        <dbReference type="ChEBI" id="CHEBI:33019"/>
        <dbReference type="ChEBI" id="CHEBI:58057"/>
        <dbReference type="ChEBI" id="CHEBI:128769"/>
        <dbReference type="ChEBI" id="CHEBI:175763"/>
        <dbReference type="EC" id="2.5.1.10"/>
    </reaction>
</comment>
<comment type="cofactor">
    <cofactor evidence="1">
        <name>Mg(2+)</name>
        <dbReference type="ChEBI" id="CHEBI:18420"/>
    </cofactor>
    <text evidence="1">Binds 2 Mg(2+) ions per subunit.</text>
</comment>
<comment type="subcellular location">
    <subcellularLocation>
        <location evidence="4">Cytoplasm</location>
    </subcellularLocation>
</comment>
<comment type="similarity">
    <text evidence="4">Belongs to the FPP/GGPP synthase family.</text>
</comment>
<comment type="sequence caution" evidence="4">
    <conflict type="erroneous initiation">
        <sequence resource="EMBL-CDS" id="BAC47413"/>
    </conflict>
</comment>
<keyword id="KW-0963">Cytoplasm</keyword>
<keyword id="KW-0414">Isoprene biosynthesis</keyword>
<keyword id="KW-0460">Magnesium</keyword>
<keyword id="KW-0479">Metal-binding</keyword>
<keyword id="KW-1185">Reference proteome</keyword>
<keyword id="KW-0808">Transferase</keyword>